<dbReference type="EC" id="1.14.13.82"/>
<dbReference type="EMBL" id="M22077">
    <property type="protein sequence ID" value="AAA26019.1"/>
    <property type="molecule type" value="Genomic_DNA"/>
</dbReference>
<dbReference type="SMR" id="P12609"/>
<dbReference type="KEGG" id="ag:AAA26019"/>
<dbReference type="UniPathway" id="UPA00217"/>
<dbReference type="GO" id="GO:0051537">
    <property type="term" value="F:2 iron, 2 sulfur cluster binding"/>
    <property type="evidence" value="ECO:0007669"/>
    <property type="project" value="UniProtKB-KW"/>
</dbReference>
<dbReference type="GO" id="GO:0005506">
    <property type="term" value="F:iron ion binding"/>
    <property type="evidence" value="ECO:0007669"/>
    <property type="project" value="InterPro"/>
</dbReference>
<dbReference type="GO" id="GO:0018489">
    <property type="term" value="F:vanillate monooxygenase activity"/>
    <property type="evidence" value="ECO:0007669"/>
    <property type="project" value="UniProtKB-EC"/>
</dbReference>
<dbReference type="GO" id="GO:0046274">
    <property type="term" value="P:lignin catabolic process"/>
    <property type="evidence" value="ECO:0007669"/>
    <property type="project" value="UniProtKB-KW"/>
</dbReference>
<dbReference type="CDD" id="cd08878">
    <property type="entry name" value="RHO_alpha_C_DMO-like"/>
    <property type="match status" value="1"/>
</dbReference>
<dbReference type="Gene3D" id="3.90.380.10">
    <property type="entry name" value="Naphthalene 1,2-dioxygenase Alpha Subunit, Chain A, domain 1"/>
    <property type="match status" value="1"/>
</dbReference>
<dbReference type="Gene3D" id="2.102.10.10">
    <property type="entry name" value="Rieske [2Fe-2S] iron-sulphur domain"/>
    <property type="match status" value="1"/>
</dbReference>
<dbReference type="InterPro" id="IPR050584">
    <property type="entry name" value="Cholesterol_7-desaturase"/>
</dbReference>
<dbReference type="InterPro" id="IPR017941">
    <property type="entry name" value="Rieske_2Fe-2S"/>
</dbReference>
<dbReference type="InterPro" id="IPR036922">
    <property type="entry name" value="Rieske_2Fe-2S_sf"/>
</dbReference>
<dbReference type="InterPro" id="IPR015881">
    <property type="entry name" value="Ring-hydroxy_dOase_2Fe2S_BS"/>
</dbReference>
<dbReference type="InterPro" id="IPR044043">
    <property type="entry name" value="VanA_C_cat"/>
</dbReference>
<dbReference type="PANTHER" id="PTHR21266:SF60">
    <property type="entry name" value="3-KETOSTEROID-9-ALPHA-MONOOXYGENASE, OXYGENASE COMPONENT"/>
    <property type="match status" value="1"/>
</dbReference>
<dbReference type="PANTHER" id="PTHR21266">
    <property type="entry name" value="IRON-SULFUR DOMAIN CONTAINING PROTEIN"/>
    <property type="match status" value="1"/>
</dbReference>
<dbReference type="Pfam" id="PF00355">
    <property type="entry name" value="Rieske"/>
    <property type="match status" value="1"/>
</dbReference>
<dbReference type="Pfam" id="PF19112">
    <property type="entry name" value="VanA_C"/>
    <property type="match status" value="1"/>
</dbReference>
<dbReference type="SUPFAM" id="SSF55961">
    <property type="entry name" value="Bet v1-like"/>
    <property type="match status" value="1"/>
</dbReference>
<dbReference type="SUPFAM" id="SSF50022">
    <property type="entry name" value="ISP domain"/>
    <property type="match status" value="1"/>
</dbReference>
<dbReference type="PROSITE" id="PS51296">
    <property type="entry name" value="RIESKE"/>
    <property type="match status" value="1"/>
</dbReference>
<dbReference type="PROSITE" id="PS00570">
    <property type="entry name" value="RING_HYDROXYL_ALPHA"/>
    <property type="match status" value="1"/>
</dbReference>
<evidence type="ECO:0000255" key="1">
    <source>
        <dbReference type="PROSITE-ProRule" id="PRU00628"/>
    </source>
</evidence>
<evidence type="ECO:0000305" key="2"/>
<reference key="1">
    <citation type="journal article" date="1988" name="J. Bacteriol.">
        <title>Cloning and sequencing of Pseudomonas genes encoding vanillate demethylase.</title>
        <authorList>
            <person name="Brunel F."/>
            <person name="Davison J."/>
        </authorList>
    </citation>
    <scope>NUCLEOTIDE SEQUENCE [GENOMIC DNA]</scope>
</reference>
<comment type="catalytic activity">
    <reaction>
        <text>vanillate + NADH + O2 + H(+) = 3,4-dihydroxybenzoate + formaldehyde + NAD(+) + H2O</text>
        <dbReference type="Rhea" id="RHEA:13021"/>
        <dbReference type="ChEBI" id="CHEBI:15377"/>
        <dbReference type="ChEBI" id="CHEBI:15378"/>
        <dbReference type="ChEBI" id="CHEBI:15379"/>
        <dbReference type="ChEBI" id="CHEBI:16632"/>
        <dbReference type="ChEBI" id="CHEBI:16842"/>
        <dbReference type="ChEBI" id="CHEBI:36241"/>
        <dbReference type="ChEBI" id="CHEBI:57540"/>
        <dbReference type="ChEBI" id="CHEBI:57945"/>
        <dbReference type="EC" id="1.14.13.82"/>
    </reaction>
</comment>
<comment type="cofactor">
    <cofactor evidence="2">
        <name>[2Fe-2S] cluster</name>
        <dbReference type="ChEBI" id="CHEBI:190135"/>
    </cofactor>
    <text evidence="2">Binds 1 [2Fe-2S] cluster.</text>
</comment>
<comment type="cofactor">
    <cofactor evidence="2">
        <name>Fe cation</name>
        <dbReference type="ChEBI" id="CHEBI:24875"/>
    </cofactor>
    <text evidence="2">Binds 1 Fe cation.</text>
</comment>
<comment type="pathway">
    <text>Xenobiotic degradation; vanillyl-alcohol degradation.</text>
</comment>
<comment type="subunit">
    <text>This demethylase system consists of two proteins: an oxygenase and an oxygenase reductase.</text>
</comment>
<comment type="similarity">
    <text evidence="2">Belongs to the bacterial ring-hydroxylating dioxygenase alpha subunit family.</text>
</comment>
<keyword id="KW-0001">2Fe-2S</keyword>
<keyword id="KW-0058">Aromatic hydrocarbons catabolism</keyword>
<keyword id="KW-0408">Iron</keyword>
<keyword id="KW-0411">Iron-sulfur</keyword>
<keyword id="KW-0439">Lignin degradation</keyword>
<keyword id="KW-0479">Metal-binding</keyword>
<keyword id="KW-0503">Monooxygenase</keyword>
<keyword id="KW-0520">NAD</keyword>
<keyword id="KW-0560">Oxidoreductase</keyword>
<feature type="chain" id="PRO_0000085058" description="Vanillate O-demethylase oxygenase subunit">
    <location>
        <begin position="1"/>
        <end position="329"/>
    </location>
</feature>
<feature type="domain" description="Rieske" evidence="1">
    <location>
        <begin position="1"/>
        <end position="84"/>
    </location>
</feature>
<feature type="binding site" evidence="1">
    <location>
        <position position="24"/>
    </location>
    <ligand>
        <name>[2Fe-2S] cluster</name>
        <dbReference type="ChEBI" id="CHEBI:190135"/>
    </ligand>
</feature>
<feature type="binding site" evidence="1">
    <location>
        <position position="26"/>
    </location>
    <ligand>
        <name>[2Fe-2S] cluster</name>
        <dbReference type="ChEBI" id="CHEBI:190135"/>
    </ligand>
</feature>
<feature type="binding site" evidence="1">
    <location>
        <position position="43"/>
    </location>
    <ligand>
        <name>[2Fe-2S] cluster</name>
        <dbReference type="ChEBI" id="CHEBI:190135"/>
    </ligand>
</feature>
<feature type="binding site" evidence="1">
    <location>
        <position position="46"/>
    </location>
    <ligand>
        <name>[2Fe-2S] cluster</name>
        <dbReference type="ChEBI" id="CHEBI:190135"/>
    </ligand>
</feature>
<name>VANA_PSES9</name>
<gene>
    <name type="primary">vanA</name>
</gene>
<protein>
    <recommendedName>
        <fullName>Vanillate O-demethylase oxygenase subunit</fullName>
        <ecNumber>1.14.13.82</ecNumber>
    </recommendedName>
    <alternativeName>
        <fullName>4-hydroxy-3-methoxybenzoate demethylase</fullName>
    </alternativeName>
</protein>
<accession>P12609</accession>
<proteinExistence type="inferred from homology"/>
<sequence length="329" mass="36579">MICNERMVIYRGAGQRVAALEDFCPHRGAPLSLGSIQDGKLVCGYHGLVMDCDGRTASMPAQRVQAFPCIRAFPAQERHGFIWVWPGDAALADPALIPHLEWAENPAWAYGGGLYHIACDYRLMIDNLMDLTHETYVHASSIGQKEIDEAPVSTRVEGDRLITGRFMEGILAPPFWRAALRGNGLADDVPVDRWQICRFTPPSHVLIEVGVAHAGRGGYDAPADCKASSIVVDFITPETDTSIWYFWGMARSFRPEDNELTARIREGQGTIFAEDLEMLEQQQRNLLAWPERPLLKLNIDAGGVQSRRIIERLVSAERAAEAQLIGRQA</sequence>
<organism>
    <name type="scientific">Pseudomonas sp. (strain ATCC 19151)</name>
    <dbReference type="NCBI Taxonomy" id="315"/>
    <lineage>
        <taxon>Bacteria</taxon>
        <taxon>Pseudomonadati</taxon>
        <taxon>Pseudomonadota</taxon>
    </lineage>
</organism>